<proteinExistence type="evidence at protein level"/>
<comment type="function">
    <text evidence="1 3 4 5 6">Catalyzes the hydrolysis of membrane sphingomyelin to form phosphorylcholine and ceramide (PubMed:16517606, PubMed:25180167). It has a relevant role in the homeostasis of membrane sphingolipids, thereby influencing membrane integrity, and endoplasmic reticulum organization and function (PubMed:31495489). May sensitize cells to DNA damage-induced apoptosis (PubMed:18505924). In skeletal muscle, mediates TNF-stimulated oxidant production (By similarity).</text>
</comment>
<comment type="catalytic activity">
    <reaction evidence="3 5">
        <text>a sphingomyelin + H2O = phosphocholine + an N-acylsphing-4-enine + H(+)</text>
        <dbReference type="Rhea" id="RHEA:19253"/>
        <dbReference type="ChEBI" id="CHEBI:15377"/>
        <dbReference type="ChEBI" id="CHEBI:15378"/>
        <dbReference type="ChEBI" id="CHEBI:17636"/>
        <dbReference type="ChEBI" id="CHEBI:52639"/>
        <dbReference type="ChEBI" id="CHEBI:295975"/>
        <dbReference type="EC" id="3.1.4.12"/>
    </reaction>
    <physiologicalReaction direction="left-to-right" evidence="13">
        <dbReference type="Rhea" id="RHEA:19254"/>
    </physiologicalReaction>
</comment>
<comment type="cofactor">
    <cofactor evidence="3">
        <name>Mg(2+)</name>
        <dbReference type="ChEBI" id="CHEBI:18420"/>
    </cofactor>
</comment>
<comment type="activity regulation">
    <text evidence="3">Activated by phosphatidylserine and tumor necrosis factor (TNF). Inhibited by scyphostatin.</text>
</comment>
<comment type="biophysicochemical properties">
    <phDependence>
        <text evidence="3">Optimum pH is 7.0.</text>
    </phDependence>
</comment>
<comment type="subcellular location">
    <subcellularLocation>
        <location evidence="3 4 6">Endoplasmic reticulum membrane</location>
        <topology evidence="2">Single-pass membrane protein</topology>
    </subcellularLocation>
    <subcellularLocation>
        <location evidence="3">Golgi apparatus membrane</location>
        <topology evidence="2">Single-pass membrane protein</topology>
    </subcellularLocation>
    <subcellularLocation>
        <location evidence="6">Nucleus envelope</location>
    </subcellularLocation>
    <subcellularLocation>
        <location evidence="1">Cell membrane</location>
        <location evidence="1">Sarcolemma</location>
    </subcellularLocation>
</comment>
<comment type="alternative products">
    <event type="alternative splicing"/>
    <isoform>
        <id>Q9NXE4-1</id>
        <name>1</name>
        <name evidence="10">nSMase3a</name>
        <sequence type="displayed"/>
    </isoform>
    <isoform>
        <id>Q9NXE4-2</id>
        <name>2</name>
        <name evidence="10">nSMase3b</name>
        <sequence type="described" ref="VSP_022481"/>
    </isoform>
    <isoform>
        <id>Q9NXE4-3</id>
        <name>3</name>
        <sequence type="described" ref="VSP_022480"/>
    </isoform>
    <isoform>
        <id>Q9NXE4-4</id>
        <name>4</name>
        <sequence type="described" ref="VSP_022482"/>
    </isoform>
    <isoform>
        <id>Q9NXE4-5</id>
        <name>5</name>
        <sequence type="described" ref="VSP_022479 VSP_022483"/>
    </isoform>
    <isoform>
        <id>Q9NXE4-6</id>
        <name>6</name>
        <sequence type="described" ref="VSP_044495 VSP_022481"/>
    </isoform>
    <isoform>
        <id>Q9NXE4-7</id>
        <name>7</name>
        <sequence type="described" ref="VSP_054382 VSP_054385"/>
    </isoform>
    <isoform>
        <id>Q9NXE4-8</id>
        <name>8</name>
        <sequence type="described" ref="VSP_044495 VSP_054386 VSP_022481"/>
    </isoform>
    <isoform>
        <id>Q9NXE4-9</id>
        <name>9</name>
        <sequence type="described" ref="VSP_054383 VSP_054384"/>
    </isoform>
    <isoform>
        <id>Q9NXE4-10</id>
        <name>10</name>
        <sequence type="described" ref="VSP_055343 VSP_022481"/>
    </isoform>
</comment>
<comment type="tissue specificity">
    <text evidence="3 4 5">Widely expressed, with highest levels in heart and skeletal muscle.</text>
</comment>
<comment type="tissue specificity">
    <molecule>Isoform 1</molecule>
    <text evidence="5">Expressed in skeletal muscle (at protein level).</text>
</comment>
<comment type="tissue specificity">
    <molecule>Isoform 2</molecule>
    <text evidence="5">Expressed in skeletal muscle but a lower levels than isoform 1 (at protein level).</text>
</comment>
<comment type="induction">
    <text evidence="4">Expression is induced by DNA-damage and TNF.</text>
</comment>
<comment type="disease" evidence="6">
    <disease id="DI-05678">
        <name>Neurodevelopmental disorder with microcephaly, arthrogryposis, and structural brain anomalies</name>
        <acronym>NEDMABA</acronym>
        <description>An autosomal recessive disorder characterized by severe global developmental delay, severely impaired intellectual development with poor or absent speech, severe encephalopathy, microcephaly with simplified gyral pattern, hypomyelination, thin corpus callosum, mild cerebellar hypoplasia, brainstem hypoplasia, congenital arthrogryposis, dysmorphic features, and respiratory problems often leading to early demise.</description>
        <dbReference type="MIM" id="618622"/>
    </disease>
    <text>The disease is caused by variants affecting the gene represented in this entry.</text>
</comment>
<comment type="sequence caution" evidence="11">
    <conflict type="erroneous initiation">
        <sequence resource="EMBL-CDS" id="AAY14883"/>
    </conflict>
    <text>Truncated N-terminus.</text>
</comment>
<comment type="sequence caution" evidence="11">
    <conflict type="erroneous initiation">
        <sequence resource="EMBL-CDS" id="BAA91070"/>
    </conflict>
    <text>Truncated N-terminus.</text>
</comment>
<comment type="sequence caution" evidence="11">
    <conflict type="erroneous initiation">
        <sequence resource="EMBL-CDS" id="BAA91368"/>
    </conflict>
    <text>Truncated N-terminus.</text>
</comment>
<comment type="sequence caution" evidence="11">
    <conflict type="erroneous initiation">
        <sequence resource="EMBL-CDS" id="BAA91567"/>
    </conflict>
    <text>Truncated N-terminus.</text>
</comment>
<comment type="sequence caution" evidence="11">
    <conflict type="erroneous initiation">
        <sequence resource="EMBL-CDS" id="BAA92656"/>
    </conflict>
    <text>Truncated N-terminus.</text>
</comment>
<accession>Q9NXE4</accession>
<accession>B1PBA3</accession>
<accession>B4DM23</accession>
<accession>B4DQ31</accession>
<accession>B4DRB8</accession>
<accession>B4DWK7</accession>
<accession>B4E0L6</accession>
<accession>E7ESA2</accession>
<accession>E9PCE6</accession>
<accession>Q6FI76</accession>
<accession>Q6P1P7</accession>
<accession>Q6ZT43</accession>
<accession>Q9H0M2</accession>
<accession>Q9NW20</accession>
<accession>Q9NWL2</accession>
<accession>Q9P2C9</accession>
<name>NSMA3_HUMAN</name>
<dbReference type="EC" id="3.1.4.12" evidence="3"/>
<dbReference type="EMBL" id="EU367941">
    <property type="protein sequence ID" value="ACA48221.1"/>
    <property type="molecule type" value="mRNA"/>
</dbReference>
<dbReference type="EMBL" id="AB037839">
    <property type="protein sequence ID" value="BAA92656.1"/>
    <property type="status" value="ALT_INIT"/>
    <property type="molecule type" value="mRNA"/>
</dbReference>
<dbReference type="EMBL" id="AK000304">
    <property type="protein sequence ID" value="BAA91070.1"/>
    <property type="status" value="ALT_INIT"/>
    <property type="molecule type" value="mRNA"/>
</dbReference>
<dbReference type="EMBL" id="AK000763">
    <property type="protein sequence ID" value="BAA91368.1"/>
    <property type="status" value="ALT_INIT"/>
    <property type="molecule type" value="mRNA"/>
</dbReference>
<dbReference type="EMBL" id="AK001227">
    <property type="protein sequence ID" value="BAA91567.1"/>
    <property type="status" value="ALT_INIT"/>
    <property type="molecule type" value="mRNA"/>
</dbReference>
<dbReference type="EMBL" id="AK126920">
    <property type="protein sequence ID" value="BAC86751.1"/>
    <property type="molecule type" value="mRNA"/>
</dbReference>
<dbReference type="EMBL" id="AK297257">
    <property type="protein sequence ID" value="BAG59735.1"/>
    <property type="molecule type" value="mRNA"/>
</dbReference>
<dbReference type="EMBL" id="AK298609">
    <property type="protein sequence ID" value="BAG60793.1"/>
    <property type="molecule type" value="mRNA"/>
</dbReference>
<dbReference type="EMBL" id="AK299185">
    <property type="protein sequence ID" value="BAG61230.1"/>
    <property type="molecule type" value="mRNA"/>
</dbReference>
<dbReference type="EMBL" id="AK303427">
    <property type="protein sequence ID" value="BAG64478.1"/>
    <property type="molecule type" value="mRNA"/>
</dbReference>
<dbReference type="EMBL" id="AK301576">
    <property type="protein sequence ID" value="BAG63069.1"/>
    <property type="molecule type" value="mRNA"/>
</dbReference>
<dbReference type="EMBL" id="AC018804">
    <property type="protein sequence ID" value="AAY14883.1"/>
    <property type="status" value="ALT_INIT"/>
    <property type="molecule type" value="Genomic_DNA"/>
</dbReference>
<dbReference type="EMBL" id="CH471263">
    <property type="protein sequence ID" value="EAW55600.1"/>
    <property type="molecule type" value="Genomic_DNA"/>
</dbReference>
<dbReference type="EMBL" id="BC064947">
    <property type="protein sequence ID" value="AAH64947.1"/>
    <property type="molecule type" value="mRNA"/>
</dbReference>
<dbReference type="EMBL" id="AL136737">
    <property type="protein sequence ID" value="CAB66671.2"/>
    <property type="molecule type" value="mRNA"/>
</dbReference>
<dbReference type="EMBL" id="CR533550">
    <property type="protein sequence ID" value="CAG38581.1"/>
    <property type="molecule type" value="mRNA"/>
</dbReference>
<dbReference type="CCDS" id="CCDS2156.2">
    <molecule id="Q9NXE4-2"/>
</dbReference>
<dbReference type="CCDS" id="CCDS54398.1">
    <molecule id="Q9NXE4-6"/>
</dbReference>
<dbReference type="RefSeq" id="NP_001164554.1">
    <molecule id="Q9NXE4-6"/>
    <property type="nucleotide sequence ID" value="NM_001171083.2"/>
</dbReference>
<dbReference type="RefSeq" id="NP_060221.2">
    <molecule id="Q9NXE4-2"/>
    <property type="nucleotide sequence ID" value="NM_017751.4"/>
</dbReference>
<dbReference type="RefSeq" id="NP_060421.2">
    <property type="nucleotide sequence ID" value="NM_017951.4"/>
</dbReference>
<dbReference type="RefSeq" id="XP_011509747.1">
    <property type="nucleotide sequence ID" value="XM_011511445.2"/>
</dbReference>
<dbReference type="RefSeq" id="XP_016859937.1">
    <property type="nucleotide sequence ID" value="XM_017004448.1"/>
</dbReference>
<dbReference type="RefSeq" id="XP_016859938.1">
    <property type="nucleotide sequence ID" value="XM_017004449.1"/>
</dbReference>
<dbReference type="RefSeq" id="XP_024308746.1">
    <molecule id="Q9NXE4-7"/>
    <property type="nucleotide sequence ID" value="XM_024452978.2"/>
</dbReference>
<dbReference type="RefSeq" id="XP_047300894.1">
    <molecule id="Q9NXE4-3"/>
    <property type="nucleotide sequence ID" value="XM_047444938.1"/>
</dbReference>
<dbReference type="RefSeq" id="XP_054188854.1">
    <molecule id="Q9NXE4-4"/>
    <property type="nucleotide sequence ID" value="XM_054332879.1"/>
</dbReference>
<dbReference type="RefSeq" id="XP_054188858.1">
    <molecule id="Q9NXE4-7"/>
    <property type="nucleotide sequence ID" value="XM_054332883.1"/>
</dbReference>
<dbReference type="RefSeq" id="XP_054198845.1">
    <molecule id="Q9NXE4-4"/>
    <property type="nucleotide sequence ID" value="XM_054342870.1"/>
</dbReference>
<dbReference type="RefSeq" id="XP_054198849.1">
    <molecule id="Q9NXE4-7"/>
    <property type="nucleotide sequence ID" value="XM_054342874.1"/>
</dbReference>
<dbReference type="BioGRID" id="120766">
    <property type="interactions" value="210"/>
</dbReference>
<dbReference type="FunCoup" id="Q9NXE4">
    <property type="interactions" value="3132"/>
</dbReference>
<dbReference type="IntAct" id="Q9NXE4">
    <property type="interactions" value="61"/>
</dbReference>
<dbReference type="MINT" id="Q9NXE4"/>
<dbReference type="STRING" id="9606.ENSP00000386531"/>
<dbReference type="DrugBank" id="DB00144">
    <property type="generic name" value="Phosphatidyl serine"/>
</dbReference>
<dbReference type="GlyCosmos" id="Q9NXE4">
    <property type="glycosylation" value="1 site, 1 glycan"/>
</dbReference>
<dbReference type="GlyGen" id="Q9NXE4">
    <property type="glycosylation" value="1 site, 1 O-linked glycan (1 site)"/>
</dbReference>
<dbReference type="iPTMnet" id="Q9NXE4"/>
<dbReference type="PhosphoSitePlus" id="Q9NXE4"/>
<dbReference type="SwissPalm" id="Q9NXE4"/>
<dbReference type="BioMuta" id="SMPD4"/>
<dbReference type="DMDM" id="124015179"/>
<dbReference type="jPOST" id="Q9NXE4"/>
<dbReference type="MassIVE" id="Q9NXE4"/>
<dbReference type="PaxDb" id="9606-ENSP00000386531"/>
<dbReference type="PeptideAtlas" id="Q9NXE4"/>
<dbReference type="ProteomicsDB" id="17945"/>
<dbReference type="ProteomicsDB" id="4578"/>
<dbReference type="ProteomicsDB" id="4839"/>
<dbReference type="ProteomicsDB" id="5350"/>
<dbReference type="ProteomicsDB" id="5684"/>
<dbReference type="ProteomicsDB" id="83079">
    <molecule id="Q9NXE4-1"/>
</dbReference>
<dbReference type="ProteomicsDB" id="83080">
    <molecule id="Q9NXE4-2"/>
</dbReference>
<dbReference type="ProteomicsDB" id="83081">
    <molecule id="Q9NXE4-3"/>
</dbReference>
<dbReference type="ProteomicsDB" id="83082">
    <molecule id="Q9NXE4-4"/>
</dbReference>
<dbReference type="ProteomicsDB" id="83083">
    <molecule id="Q9NXE4-5"/>
</dbReference>
<dbReference type="Pumba" id="Q9NXE4"/>
<dbReference type="Antibodypedia" id="56085">
    <property type="antibodies" value="84 antibodies from 20 providers"/>
</dbReference>
<dbReference type="DNASU" id="55627"/>
<dbReference type="Ensembl" id="ENST00000351288.10">
    <molecule id="Q9NXE4-2"/>
    <property type="protein sequence ID" value="ENSP00000259217.8"/>
    <property type="gene ID" value="ENSG00000136699.20"/>
</dbReference>
<dbReference type="Ensembl" id="ENST00000409031.5">
    <molecule id="Q9NXE4-1"/>
    <property type="protein sequence ID" value="ENSP00000386531.1"/>
    <property type="gene ID" value="ENSG00000136699.20"/>
</dbReference>
<dbReference type="Ensembl" id="ENST00000431183.6">
    <molecule id="Q9NXE4-6"/>
    <property type="protein sequence ID" value="ENSP00000405187.2"/>
    <property type="gene ID" value="ENSG00000136699.20"/>
</dbReference>
<dbReference type="Ensembl" id="ENST00000709800.1">
    <molecule id="Q9NXE4-6"/>
    <property type="protein sequence ID" value="ENSP00000517878.1"/>
    <property type="gene ID" value="ENSG00000292130.1"/>
</dbReference>
<dbReference type="Ensembl" id="ENST00000709804.1">
    <molecule id="Q9NXE4-2"/>
    <property type="protein sequence ID" value="ENSP00000517882.1"/>
    <property type="gene ID" value="ENSG00000292130.1"/>
</dbReference>
<dbReference type="Ensembl" id="ENST00000709809.1">
    <molecule id="Q9NXE4-1"/>
    <property type="protein sequence ID" value="ENSP00000517885.1"/>
    <property type="gene ID" value="ENSG00000292130.1"/>
</dbReference>
<dbReference type="GeneID" id="55627"/>
<dbReference type="KEGG" id="hsa:55627"/>
<dbReference type="UCSC" id="uc002tqq.3">
    <property type="organism name" value="human"/>
</dbReference>
<dbReference type="UCSC" id="uc010zab.3">
    <molecule id="Q9NXE4-1"/>
    <property type="organism name" value="human"/>
</dbReference>
<dbReference type="AGR" id="HGNC:32949"/>
<dbReference type="CTD" id="55627"/>
<dbReference type="DisGeNET" id="55627"/>
<dbReference type="GeneCards" id="SMPD4"/>
<dbReference type="HGNC" id="HGNC:32949">
    <property type="gene designation" value="SMPD4"/>
</dbReference>
<dbReference type="HPA" id="ENSG00000136699">
    <property type="expression patterns" value="Low tissue specificity"/>
</dbReference>
<dbReference type="MalaCards" id="SMPD4"/>
<dbReference type="MIM" id="610457">
    <property type="type" value="gene"/>
</dbReference>
<dbReference type="MIM" id="618622">
    <property type="type" value="phenotype"/>
</dbReference>
<dbReference type="neXtProt" id="NX_Q9NXE4"/>
<dbReference type="OpenTargets" id="ENSG00000136699"/>
<dbReference type="PharmGKB" id="PA145148067"/>
<dbReference type="VEuPathDB" id="HostDB:ENSG00000136699"/>
<dbReference type="eggNOG" id="KOG4396">
    <property type="taxonomic scope" value="Eukaryota"/>
</dbReference>
<dbReference type="GeneTree" id="ENSGT00390000006044"/>
<dbReference type="InParanoid" id="Q9NXE4"/>
<dbReference type="OMA" id="EERGKIH"/>
<dbReference type="OrthoDB" id="9530545at2759"/>
<dbReference type="PAN-GO" id="Q9NXE4">
    <property type="GO annotations" value="4 GO annotations based on evolutionary models"/>
</dbReference>
<dbReference type="PhylomeDB" id="Q9NXE4"/>
<dbReference type="TreeFam" id="TF324409"/>
<dbReference type="BRENDA" id="3.1.4.12">
    <property type="organism ID" value="2681"/>
</dbReference>
<dbReference type="PathwayCommons" id="Q9NXE4"/>
<dbReference type="Reactome" id="R-HSA-9840310">
    <property type="pathway name" value="Glycosphingolipid catabolism"/>
</dbReference>
<dbReference type="SignaLink" id="Q9NXE4"/>
<dbReference type="BioGRID-ORCS" id="55627">
    <property type="hits" value="16 hits in 1157 CRISPR screens"/>
</dbReference>
<dbReference type="ChiTaRS" id="SMPD4">
    <property type="organism name" value="human"/>
</dbReference>
<dbReference type="GeneWiki" id="SMPD4"/>
<dbReference type="GenomeRNAi" id="55627"/>
<dbReference type="Pharos" id="Q9NXE4">
    <property type="development level" value="Tbio"/>
</dbReference>
<dbReference type="PRO" id="PR:Q9NXE4"/>
<dbReference type="Proteomes" id="UP000005640">
    <property type="component" value="Chromosome 2"/>
</dbReference>
<dbReference type="RNAct" id="Q9NXE4">
    <property type="molecule type" value="protein"/>
</dbReference>
<dbReference type="Bgee" id="ENSG00000136699">
    <property type="expression patterns" value="Expressed in pituitary gland and 96 other cell types or tissues"/>
</dbReference>
<dbReference type="ExpressionAtlas" id="Q9NXE4">
    <property type="expression patterns" value="baseline and differential"/>
</dbReference>
<dbReference type="GO" id="GO:0005783">
    <property type="term" value="C:endoplasmic reticulum"/>
    <property type="evidence" value="ECO:0000314"/>
    <property type="project" value="UniProtKB"/>
</dbReference>
<dbReference type="GO" id="GO:0005789">
    <property type="term" value="C:endoplasmic reticulum membrane"/>
    <property type="evidence" value="ECO:0000304"/>
    <property type="project" value="Reactome"/>
</dbReference>
<dbReference type="GO" id="GO:0005794">
    <property type="term" value="C:Golgi apparatus"/>
    <property type="evidence" value="ECO:0000314"/>
    <property type="project" value="HGNC-UCL"/>
</dbReference>
<dbReference type="GO" id="GO:0000139">
    <property type="term" value="C:Golgi membrane"/>
    <property type="evidence" value="ECO:0007669"/>
    <property type="project" value="UniProtKB-SubCell"/>
</dbReference>
<dbReference type="GO" id="GO:0005635">
    <property type="term" value="C:nuclear envelope"/>
    <property type="evidence" value="ECO:0000250"/>
    <property type="project" value="UniProtKB"/>
</dbReference>
<dbReference type="GO" id="GO:0005640">
    <property type="term" value="C:nuclear outer membrane"/>
    <property type="evidence" value="ECO:0000314"/>
    <property type="project" value="UniProtKB"/>
</dbReference>
<dbReference type="GO" id="GO:0042383">
    <property type="term" value="C:sarcolemma"/>
    <property type="evidence" value="ECO:0000250"/>
    <property type="project" value="UniProtKB"/>
</dbReference>
<dbReference type="GO" id="GO:0005802">
    <property type="term" value="C:trans-Golgi network"/>
    <property type="evidence" value="ECO:0000314"/>
    <property type="project" value="HGNC-UCL"/>
</dbReference>
<dbReference type="GO" id="GO:0046872">
    <property type="term" value="F:metal ion binding"/>
    <property type="evidence" value="ECO:0007669"/>
    <property type="project" value="UniProtKB-KW"/>
</dbReference>
<dbReference type="GO" id="GO:0004767">
    <property type="term" value="F:sphingomyelin phosphodiesterase activity"/>
    <property type="evidence" value="ECO:0007669"/>
    <property type="project" value="UniProtKB-EC"/>
</dbReference>
<dbReference type="GO" id="GO:0050290">
    <property type="term" value="F:sphingomyelin phosphodiesterase D activity"/>
    <property type="evidence" value="ECO:0000314"/>
    <property type="project" value="UniProtKB"/>
</dbReference>
<dbReference type="GO" id="GO:0071356">
    <property type="term" value="P:cellular response to tumor necrosis factor"/>
    <property type="evidence" value="ECO:0000314"/>
    <property type="project" value="BHF-UCL"/>
</dbReference>
<dbReference type="GO" id="GO:0046513">
    <property type="term" value="P:ceramide biosynthetic process"/>
    <property type="evidence" value="ECO:0000314"/>
    <property type="project" value="UniProtKB"/>
</dbReference>
<dbReference type="GO" id="GO:0007029">
    <property type="term" value="P:endoplasmic reticulum organization"/>
    <property type="evidence" value="ECO:0000315"/>
    <property type="project" value="UniProtKB"/>
</dbReference>
<dbReference type="GO" id="GO:0046475">
    <property type="term" value="P:glycerophospholipid catabolic process"/>
    <property type="evidence" value="ECO:0000314"/>
    <property type="project" value="BHF-UCL"/>
</dbReference>
<dbReference type="GO" id="GO:0006685">
    <property type="term" value="P:sphingomyelin catabolic process"/>
    <property type="evidence" value="ECO:0000314"/>
    <property type="project" value="UniProtKB"/>
</dbReference>
<dbReference type="InterPro" id="IPR024129">
    <property type="entry name" value="Sphingomy_SMPD4"/>
</dbReference>
<dbReference type="PANTHER" id="PTHR12988">
    <property type="entry name" value="SPHINGOMYELIN PHOSPHODIESTERASE 4"/>
    <property type="match status" value="1"/>
</dbReference>
<dbReference type="PANTHER" id="PTHR12988:SF6">
    <property type="entry name" value="SPHINGOMYELIN PHOSPHODIESTERASE 4"/>
    <property type="match status" value="1"/>
</dbReference>
<dbReference type="Pfam" id="PF14724">
    <property type="entry name" value="mit_SMPDase"/>
    <property type="match status" value="1"/>
</dbReference>
<keyword id="KW-0025">Alternative splicing</keyword>
<keyword id="KW-1003">Cell membrane</keyword>
<keyword id="KW-0225">Disease variant</keyword>
<keyword id="KW-0256">Endoplasmic reticulum</keyword>
<keyword id="KW-0333">Golgi apparatus</keyword>
<keyword id="KW-0378">Hydrolase</keyword>
<keyword id="KW-0991">Intellectual disability</keyword>
<keyword id="KW-0443">Lipid metabolism</keyword>
<keyword id="KW-0460">Magnesium</keyword>
<keyword id="KW-0472">Membrane</keyword>
<keyword id="KW-0479">Metal-binding</keyword>
<keyword id="KW-0539">Nucleus</keyword>
<keyword id="KW-0597">Phosphoprotein</keyword>
<keyword id="KW-1267">Proteomics identification</keyword>
<keyword id="KW-1185">Reference proteome</keyword>
<keyword id="KW-0812">Transmembrane</keyword>
<keyword id="KW-1133">Transmembrane helix</keyword>
<sequence>MTTFGAVAEWRLPSLRRATLWIPQWFAKKAIFNSPLEAAMAFPHLQQPSFLLASLKADSINKPFAQQCQDLVKVIEDFPAKELHTIFPWLVESIFGSLDGVLVGWNLRCLQGRVNPVEYSIVMEFLDPGGPMMKLVYKLQAEDYKFDFPVSYLPGPVKASIQECILPDSPLYHNKVQFTPTGGLGLNLALNPFEYYIFFFALSLITQKPLPVSLHVRTSDCAYFILVDRYLSWFLPTEGSVPPPLSSSPGGTSPSPPPRTPAIPFASYGLHHTSLLKRHISHQTSVNADPASHEIWRSETLLQVFVEMWLHHYSLEMYQKMQSPHAKLEVLHYRLSVSSALYSPAQPSLQALHAYQESFTPTEEHVLVVRLLLKHLHAFANSLKPEQASPSAHSHATSPLEEFKRAAVPRFVQQKLYLFLQHCFGHWPLDASFRAVLEMWLSYLQPWRYAPDKQAPGSDSQPRCVSEKWAPFVQENLLMYTKLFVGFLNRALRTDLVSPKHALMVFRVAKVFAQPNLAEMIQKGEQLFLEPELVIPHRQHRLFTAPTFTGSFLSPWPPAVTDASFKVKSHVYSLEGQDCKYTPMFGPEARTLVLRLAQLITQAKHTAKSISDQCAESPAGHSFLSWLGFSSMDTNGSYTANDLDEMGQDSVRKTDEYLEKALEYLRQIFRLSEAQLRQFTLALGTTQDENGKKQLPDCIVGEDGLILTPLGRYQIINGLRRFEIEYQGDPELQPIRSYEIASLVRTLFRLSSAINHRFAGQMAALCSRDDFLGSFCRYHLTEPGLASRHLLSPVGRRQVAGHTRGPRLSLRFLGSYRTLVSLLLAFFVASLFCVGPLPCTLLLTLGYVLYASAMTLLTERGKLHQP</sequence>
<gene>
    <name evidence="14" type="primary">SMPD4</name>
    <name type="synonym">KIAA1418</name>
    <name type="synonym">SKNY</name>
</gene>
<reference key="1">
    <citation type="journal article" date="2008" name="Mol. Cancer Res.">
        <title>Neutral sphingomyelinase-3 is a DNA damage and nongenotoxic stress-regulated gene that is deregulated in human malignancies.</title>
        <authorList>
            <person name="Corcoran C.A."/>
            <person name="He Q."/>
            <person name="Ponnusamy S."/>
            <person name="Ogretmen B."/>
            <person name="Huang Y."/>
            <person name="Sheikh M.S."/>
        </authorList>
    </citation>
    <scope>NUCLEOTIDE SEQUENCE [MRNA]</scope>
    <scope>FUNCTION</scope>
    <scope>SUBCELLULAR LOCATION</scope>
    <scope>INDUCTION BY DNA-DAMAGE</scope>
    <scope>MUTAGENESIS OF 862-LYS--GLN-865</scope>
    <scope>TISSUE SPECIFICITY</scope>
</reference>
<reference key="2">
    <citation type="journal article" date="2000" name="DNA Res.">
        <title>Prediction of the coding sequences of unidentified human genes. XVI. The complete sequences of 150 new cDNA clones from brain which code for large proteins in vitro.</title>
        <authorList>
            <person name="Nagase T."/>
            <person name="Kikuno R."/>
            <person name="Ishikawa K."/>
            <person name="Hirosawa M."/>
            <person name="Ohara O."/>
        </authorList>
    </citation>
    <scope>NUCLEOTIDE SEQUENCE [LARGE SCALE MRNA] (ISOFORM 1)</scope>
    <source>
        <tissue>Brain</tissue>
    </source>
</reference>
<reference key="3">
    <citation type="journal article" date="2004" name="Nat. Genet.">
        <title>Complete sequencing and characterization of 21,243 full-length human cDNAs.</title>
        <authorList>
            <person name="Ota T."/>
            <person name="Suzuki Y."/>
            <person name="Nishikawa T."/>
            <person name="Otsuki T."/>
            <person name="Sugiyama T."/>
            <person name="Irie R."/>
            <person name="Wakamatsu A."/>
            <person name="Hayashi K."/>
            <person name="Sato H."/>
            <person name="Nagai K."/>
            <person name="Kimura K."/>
            <person name="Makita H."/>
            <person name="Sekine M."/>
            <person name="Obayashi M."/>
            <person name="Nishi T."/>
            <person name="Shibahara T."/>
            <person name="Tanaka T."/>
            <person name="Ishii S."/>
            <person name="Yamamoto J."/>
            <person name="Saito K."/>
            <person name="Kawai Y."/>
            <person name="Isono Y."/>
            <person name="Nakamura Y."/>
            <person name="Nagahari K."/>
            <person name="Murakami K."/>
            <person name="Yasuda T."/>
            <person name="Iwayanagi T."/>
            <person name="Wagatsuma M."/>
            <person name="Shiratori A."/>
            <person name="Sudo H."/>
            <person name="Hosoiri T."/>
            <person name="Kaku Y."/>
            <person name="Kodaira H."/>
            <person name="Kondo H."/>
            <person name="Sugawara M."/>
            <person name="Takahashi M."/>
            <person name="Kanda K."/>
            <person name="Yokoi T."/>
            <person name="Furuya T."/>
            <person name="Kikkawa E."/>
            <person name="Omura Y."/>
            <person name="Abe K."/>
            <person name="Kamihara K."/>
            <person name="Katsuta N."/>
            <person name="Sato K."/>
            <person name="Tanikawa M."/>
            <person name="Yamazaki M."/>
            <person name="Ninomiya K."/>
            <person name="Ishibashi T."/>
            <person name="Yamashita H."/>
            <person name="Murakawa K."/>
            <person name="Fujimori K."/>
            <person name="Tanai H."/>
            <person name="Kimata M."/>
            <person name="Watanabe M."/>
            <person name="Hiraoka S."/>
            <person name="Chiba Y."/>
            <person name="Ishida S."/>
            <person name="Ono Y."/>
            <person name="Takiguchi S."/>
            <person name="Watanabe S."/>
            <person name="Yosida M."/>
            <person name="Hotuta T."/>
            <person name="Kusano J."/>
            <person name="Kanehori K."/>
            <person name="Takahashi-Fujii A."/>
            <person name="Hara H."/>
            <person name="Tanase T.-O."/>
            <person name="Nomura Y."/>
            <person name="Togiya S."/>
            <person name="Komai F."/>
            <person name="Hara R."/>
            <person name="Takeuchi K."/>
            <person name="Arita M."/>
            <person name="Imose N."/>
            <person name="Musashino K."/>
            <person name="Yuuki H."/>
            <person name="Oshima A."/>
            <person name="Sasaki N."/>
            <person name="Aotsuka S."/>
            <person name="Yoshikawa Y."/>
            <person name="Matsunawa H."/>
            <person name="Ichihara T."/>
            <person name="Shiohata N."/>
            <person name="Sano S."/>
            <person name="Moriya S."/>
            <person name="Momiyama H."/>
            <person name="Satoh N."/>
            <person name="Takami S."/>
            <person name="Terashima Y."/>
            <person name="Suzuki O."/>
            <person name="Nakagawa S."/>
            <person name="Senoh A."/>
            <person name="Mizoguchi H."/>
            <person name="Goto Y."/>
            <person name="Shimizu F."/>
            <person name="Wakebe H."/>
            <person name="Hishigaki H."/>
            <person name="Watanabe T."/>
            <person name="Sugiyama A."/>
            <person name="Takemoto M."/>
            <person name="Kawakami B."/>
            <person name="Yamazaki M."/>
            <person name="Watanabe K."/>
            <person name="Kumagai A."/>
            <person name="Itakura S."/>
            <person name="Fukuzumi Y."/>
            <person name="Fujimori Y."/>
            <person name="Komiyama M."/>
            <person name="Tashiro H."/>
            <person name="Tanigami A."/>
            <person name="Fujiwara T."/>
            <person name="Ono T."/>
            <person name="Yamada K."/>
            <person name="Fujii Y."/>
            <person name="Ozaki K."/>
            <person name="Hirao M."/>
            <person name="Ohmori Y."/>
            <person name="Kawabata A."/>
            <person name="Hikiji T."/>
            <person name="Kobatake N."/>
            <person name="Inagaki H."/>
            <person name="Ikema Y."/>
            <person name="Okamoto S."/>
            <person name="Okitani R."/>
            <person name="Kawakami T."/>
            <person name="Noguchi S."/>
            <person name="Itoh T."/>
            <person name="Shigeta K."/>
            <person name="Senba T."/>
            <person name="Matsumura K."/>
            <person name="Nakajima Y."/>
            <person name="Mizuno T."/>
            <person name="Morinaga M."/>
            <person name="Sasaki M."/>
            <person name="Togashi T."/>
            <person name="Oyama M."/>
            <person name="Hata H."/>
            <person name="Watanabe M."/>
            <person name="Komatsu T."/>
            <person name="Mizushima-Sugano J."/>
            <person name="Satoh T."/>
            <person name="Shirai Y."/>
            <person name="Takahashi Y."/>
            <person name="Nakagawa K."/>
            <person name="Okumura K."/>
            <person name="Nagase T."/>
            <person name="Nomura N."/>
            <person name="Kikuchi H."/>
            <person name="Masuho Y."/>
            <person name="Yamashita R."/>
            <person name="Nakai K."/>
            <person name="Yada T."/>
            <person name="Nakamura Y."/>
            <person name="Ohara O."/>
            <person name="Isogai T."/>
            <person name="Sugano S."/>
        </authorList>
    </citation>
    <scope>NUCLEOTIDE SEQUENCE [LARGE SCALE MRNA] (ISOFORMS 2; 4; 5; 6; 7; 8 AND 9)</scope>
    <scope>NUCLEOTIDE SEQUENCE [LARGE SCALE MRNA] OF 173-866 (ISOFORM 4)</scope>
    <source>
        <tissue>Mammary gland</tissue>
        <tissue>Thymus</tissue>
    </source>
</reference>
<reference key="4">
    <citation type="journal article" date="2005" name="Nature">
        <title>Generation and annotation of the DNA sequences of human chromosomes 2 and 4.</title>
        <authorList>
            <person name="Hillier L.W."/>
            <person name="Graves T.A."/>
            <person name="Fulton R.S."/>
            <person name="Fulton L.A."/>
            <person name="Pepin K.H."/>
            <person name="Minx P."/>
            <person name="Wagner-McPherson C."/>
            <person name="Layman D."/>
            <person name="Wylie K."/>
            <person name="Sekhon M."/>
            <person name="Becker M.C."/>
            <person name="Fewell G.A."/>
            <person name="Delehaunty K.D."/>
            <person name="Miner T.L."/>
            <person name="Nash W.E."/>
            <person name="Kremitzki C."/>
            <person name="Oddy L."/>
            <person name="Du H."/>
            <person name="Sun H."/>
            <person name="Bradshaw-Cordum H."/>
            <person name="Ali J."/>
            <person name="Carter J."/>
            <person name="Cordes M."/>
            <person name="Harris A."/>
            <person name="Isak A."/>
            <person name="van Brunt A."/>
            <person name="Nguyen C."/>
            <person name="Du F."/>
            <person name="Courtney L."/>
            <person name="Kalicki J."/>
            <person name="Ozersky P."/>
            <person name="Abbott S."/>
            <person name="Armstrong J."/>
            <person name="Belter E.A."/>
            <person name="Caruso L."/>
            <person name="Cedroni M."/>
            <person name="Cotton M."/>
            <person name="Davidson T."/>
            <person name="Desai A."/>
            <person name="Elliott G."/>
            <person name="Erb T."/>
            <person name="Fronick C."/>
            <person name="Gaige T."/>
            <person name="Haakenson W."/>
            <person name="Haglund K."/>
            <person name="Holmes A."/>
            <person name="Harkins R."/>
            <person name="Kim K."/>
            <person name="Kruchowski S.S."/>
            <person name="Strong C.M."/>
            <person name="Grewal N."/>
            <person name="Goyea E."/>
            <person name="Hou S."/>
            <person name="Levy A."/>
            <person name="Martinka S."/>
            <person name="Mead K."/>
            <person name="McLellan M.D."/>
            <person name="Meyer R."/>
            <person name="Randall-Maher J."/>
            <person name="Tomlinson C."/>
            <person name="Dauphin-Kohlberg S."/>
            <person name="Kozlowicz-Reilly A."/>
            <person name="Shah N."/>
            <person name="Swearengen-Shahid S."/>
            <person name="Snider J."/>
            <person name="Strong J.T."/>
            <person name="Thompson J."/>
            <person name="Yoakum M."/>
            <person name="Leonard S."/>
            <person name="Pearman C."/>
            <person name="Trani L."/>
            <person name="Radionenko M."/>
            <person name="Waligorski J.E."/>
            <person name="Wang C."/>
            <person name="Rock S.M."/>
            <person name="Tin-Wollam A.-M."/>
            <person name="Maupin R."/>
            <person name="Latreille P."/>
            <person name="Wendl M.C."/>
            <person name="Yang S.-P."/>
            <person name="Pohl C."/>
            <person name="Wallis J.W."/>
            <person name="Spieth J."/>
            <person name="Bieri T.A."/>
            <person name="Berkowicz N."/>
            <person name="Nelson J.O."/>
            <person name="Osborne J."/>
            <person name="Ding L."/>
            <person name="Meyer R."/>
            <person name="Sabo A."/>
            <person name="Shotland Y."/>
            <person name="Sinha P."/>
            <person name="Wohldmann P.E."/>
            <person name="Cook L.L."/>
            <person name="Hickenbotham M.T."/>
            <person name="Eldred J."/>
            <person name="Williams D."/>
            <person name="Jones T.A."/>
            <person name="She X."/>
            <person name="Ciccarelli F.D."/>
            <person name="Izaurralde E."/>
            <person name="Taylor J."/>
            <person name="Schmutz J."/>
            <person name="Myers R.M."/>
            <person name="Cox D.R."/>
            <person name="Huang X."/>
            <person name="McPherson J.D."/>
            <person name="Mardis E.R."/>
            <person name="Clifton S.W."/>
            <person name="Warren W.C."/>
            <person name="Chinwalla A.T."/>
            <person name="Eddy S.R."/>
            <person name="Marra M.A."/>
            <person name="Ovcharenko I."/>
            <person name="Furey T.S."/>
            <person name="Miller W."/>
            <person name="Eichler E.E."/>
            <person name="Bork P."/>
            <person name="Suyama M."/>
            <person name="Torrents D."/>
            <person name="Waterston R.H."/>
            <person name="Wilson R.K."/>
        </authorList>
    </citation>
    <scope>NUCLEOTIDE SEQUENCE [LARGE SCALE GENOMIC DNA]</scope>
</reference>
<reference key="5">
    <citation type="submission" date="2005-07" db="EMBL/GenBank/DDBJ databases">
        <authorList>
            <person name="Mural R.J."/>
            <person name="Istrail S."/>
            <person name="Sutton G."/>
            <person name="Florea L."/>
            <person name="Halpern A.L."/>
            <person name="Mobarry C.M."/>
            <person name="Lippert R."/>
            <person name="Walenz B."/>
            <person name="Shatkay H."/>
            <person name="Dew I."/>
            <person name="Miller J.R."/>
            <person name="Flanigan M.J."/>
            <person name="Edwards N.J."/>
            <person name="Bolanos R."/>
            <person name="Fasulo D."/>
            <person name="Halldorsson B.V."/>
            <person name="Hannenhalli S."/>
            <person name="Turner R."/>
            <person name="Yooseph S."/>
            <person name="Lu F."/>
            <person name="Nusskern D.R."/>
            <person name="Shue B.C."/>
            <person name="Zheng X.H."/>
            <person name="Zhong F."/>
            <person name="Delcher A.L."/>
            <person name="Huson D.H."/>
            <person name="Kravitz S.A."/>
            <person name="Mouchard L."/>
            <person name="Reinert K."/>
            <person name="Remington K.A."/>
            <person name="Clark A.G."/>
            <person name="Waterman M.S."/>
            <person name="Eichler E.E."/>
            <person name="Adams M.D."/>
            <person name="Hunkapiller M.W."/>
            <person name="Myers E.W."/>
            <person name="Venter J.C."/>
        </authorList>
    </citation>
    <scope>NUCLEOTIDE SEQUENCE [LARGE SCALE GENOMIC DNA]</scope>
</reference>
<reference key="6">
    <citation type="journal article" date="2004" name="Genome Res.">
        <title>The status, quality, and expansion of the NIH full-length cDNA project: the Mammalian Gene Collection (MGC).</title>
        <authorList>
            <consortium name="The MGC Project Team"/>
        </authorList>
    </citation>
    <scope>NUCLEOTIDE SEQUENCE [LARGE SCALE MRNA] (ISOFORM 3)</scope>
    <source>
        <tissue>Lung</tissue>
    </source>
</reference>
<reference key="7">
    <citation type="journal article" date="2001" name="Genome Res.">
        <title>Towards a catalog of human genes and proteins: sequencing and analysis of 500 novel complete protein coding human cDNAs.</title>
        <authorList>
            <person name="Wiemann S."/>
            <person name="Weil B."/>
            <person name="Wellenreuther R."/>
            <person name="Gassenhuber J."/>
            <person name="Glassl S."/>
            <person name="Ansorge W."/>
            <person name="Boecher M."/>
            <person name="Bloecker H."/>
            <person name="Bauersachs S."/>
            <person name="Blum H."/>
            <person name="Lauber J."/>
            <person name="Duesterhoeft A."/>
            <person name="Beyer A."/>
            <person name="Koehrer K."/>
            <person name="Strack N."/>
            <person name="Mewes H.-W."/>
            <person name="Ottenwaelder B."/>
            <person name="Obermaier B."/>
            <person name="Tampe J."/>
            <person name="Heubner D."/>
            <person name="Wambutt R."/>
            <person name="Korn B."/>
            <person name="Klein M."/>
            <person name="Poustka A."/>
        </authorList>
    </citation>
    <scope>NUCLEOTIDE SEQUENCE [LARGE SCALE MRNA] OF 436-866</scope>
    <source>
        <tissue>Testis</tissue>
    </source>
</reference>
<reference key="8">
    <citation type="submission" date="2004-06" db="EMBL/GenBank/DDBJ databases">
        <title>Cloning of human full open reading frames in Gateway(TM) system entry vector (pDONR201).</title>
        <authorList>
            <person name="Ebert L."/>
            <person name="Schick M."/>
            <person name="Neubert P."/>
            <person name="Schatten R."/>
            <person name="Henze S."/>
            <person name="Korn B."/>
        </authorList>
    </citation>
    <scope>NUCLEOTIDE SEQUENCE [LARGE SCALE MRNA] OF 439-866</scope>
</reference>
<reference key="9">
    <citation type="journal article" date="2006" name="J. Biol. Chem.">
        <title>Novel tumor necrosis factor-responsive mammalian neutral sphingomyelinase-3 is a C-tail-anchored protein.</title>
        <authorList>
            <person name="Krut O."/>
            <person name="Wiegmann K."/>
            <person name="Kashkar H."/>
            <person name="Yazdanpanah B."/>
            <person name="Kroenke M."/>
        </authorList>
    </citation>
    <scope>FUNCTION</scope>
    <scope>COFACTOR</scope>
    <scope>BIOPHYSICOCHEMICAL PROPERTIES</scope>
    <scope>ACTIVITY REGULATION</scope>
    <scope>SUBCELLULAR LOCATION</scope>
    <scope>TISSUE SPECIFICITY</scope>
</reference>
<reference key="10">
    <citation type="journal article" date="2008" name="Mol. Cell">
        <title>Kinase-selective enrichment enables quantitative phosphoproteomics of the kinome across the cell cycle.</title>
        <authorList>
            <person name="Daub H."/>
            <person name="Olsen J.V."/>
            <person name="Bairlein M."/>
            <person name="Gnad F."/>
            <person name="Oppermann F.S."/>
            <person name="Korner R."/>
            <person name="Greff Z."/>
            <person name="Keri G."/>
            <person name="Stemmann O."/>
            <person name="Mann M."/>
        </authorList>
    </citation>
    <scope>PHOSPHORYLATION [LARGE SCALE ANALYSIS] AT SER-169 AND THR-708</scope>
    <scope>IDENTIFICATION BY MASS SPECTROMETRY [LARGE SCALE ANALYSIS]</scope>
    <source>
        <tissue>Cervix carcinoma</tissue>
    </source>
</reference>
<reference key="11">
    <citation type="journal article" date="2008" name="Proc. Natl. Acad. Sci. U.S.A.">
        <title>A quantitative atlas of mitotic phosphorylation.</title>
        <authorList>
            <person name="Dephoure N."/>
            <person name="Zhou C."/>
            <person name="Villen J."/>
            <person name="Beausoleil S.A."/>
            <person name="Bakalarski C.E."/>
            <person name="Elledge S.J."/>
            <person name="Gygi S.P."/>
        </authorList>
    </citation>
    <scope>PHOSPHORYLATION [LARGE SCALE ANALYSIS] AT SER-169</scope>
    <scope>IDENTIFICATION BY MASS SPECTROMETRY [LARGE SCALE ANALYSIS]</scope>
    <source>
        <tissue>Cervix carcinoma</tissue>
    </source>
</reference>
<reference key="12">
    <citation type="journal article" date="2011" name="BMC Syst. Biol.">
        <title>Initial characterization of the human central proteome.</title>
        <authorList>
            <person name="Burkard T.R."/>
            <person name="Planyavsky M."/>
            <person name="Kaupe I."/>
            <person name="Breitwieser F.P."/>
            <person name="Buerckstuemmer T."/>
            <person name="Bennett K.L."/>
            <person name="Superti-Furga G."/>
            <person name="Colinge J."/>
        </authorList>
    </citation>
    <scope>IDENTIFICATION BY MASS SPECTROMETRY [LARGE SCALE ANALYSIS]</scope>
</reference>
<reference key="13">
    <citation type="journal article" date="2011" name="Sci. Signal.">
        <title>System-wide temporal characterization of the proteome and phosphoproteome of human embryonic stem cell differentiation.</title>
        <authorList>
            <person name="Rigbolt K.T."/>
            <person name="Prokhorova T.A."/>
            <person name="Akimov V."/>
            <person name="Henningsen J."/>
            <person name="Johansen P.T."/>
            <person name="Kratchmarova I."/>
            <person name="Kassem M."/>
            <person name="Mann M."/>
            <person name="Olsen J.V."/>
            <person name="Blagoev B."/>
        </authorList>
    </citation>
    <scope>IDENTIFICATION BY MASS SPECTROMETRY [LARGE SCALE ANALYSIS]</scope>
</reference>
<reference key="14">
    <citation type="journal article" date="2013" name="J. Proteome Res.">
        <title>Toward a comprehensive characterization of a human cancer cell phosphoproteome.</title>
        <authorList>
            <person name="Zhou H."/>
            <person name="Di Palma S."/>
            <person name="Preisinger C."/>
            <person name="Peng M."/>
            <person name="Polat A.N."/>
            <person name="Heck A.J."/>
            <person name="Mohammed S."/>
        </authorList>
    </citation>
    <scope>PHOSPHORYLATION [LARGE SCALE ANALYSIS] AT SER-169 AND SER-792</scope>
    <scope>IDENTIFICATION BY MASS SPECTROMETRY [LARGE SCALE ANALYSIS]</scope>
    <source>
        <tissue>Erythroleukemia</tissue>
    </source>
</reference>
<reference key="15">
    <citation type="journal article" date="2014" name="Redox Biol.">
        <title>Neutral sphingomyelinase-3 mediates TNF-stimulated oxidant activity in skeletal muscle.</title>
        <authorList>
            <person name="Moylan J.S."/>
            <person name="Smith J.D."/>
            <person name="Wolf Horrell E.M."/>
            <person name="McLean J.B."/>
            <person name="Deevska G.M."/>
            <person name="Bonnell M.R."/>
            <person name="Nikolova-Karakashian M.N."/>
            <person name="Reid M.B."/>
        </authorList>
    </citation>
    <scope>FUNCTION</scope>
    <scope>CATALYTIC ACTIVITY</scope>
    <scope>TISSUE SPECIFICITY</scope>
</reference>
<reference key="16">
    <citation type="journal article" date="2019" name="Am. J. Hum. Genet.">
        <title>Loss of SMPD4 causes a developmental disorder characterized by microcephaly and congenital arthrogryposis.</title>
        <authorList>
            <person name="Magini P."/>
            <person name="Smits D.J."/>
            <person name="Vandervore L."/>
            <person name="Schot R."/>
            <person name="Columbaro M."/>
            <person name="Kasteleijn E."/>
            <person name="van der Ent M."/>
            <person name="Palombo F."/>
            <person name="Lequin M.H."/>
            <person name="Dremmen M."/>
            <person name="de Wit M.C.Y."/>
            <person name="Severino M."/>
            <person name="Divizia M.T."/>
            <person name="Striano P."/>
            <person name="Ordonez-Herrera N."/>
            <person name="Alhashem A."/>
            <person name="Al Fares A."/>
            <person name="Al Ghamdi M."/>
            <person name="Rolfs A."/>
            <person name="Bauer P."/>
            <person name="Demmers J."/>
            <person name="Verheijen F.W."/>
            <person name="Wilke M."/>
            <person name="van Slegtenhorst M."/>
            <person name="van der Spek P.J."/>
            <person name="Seri M."/>
            <person name="Jansen A.C."/>
            <person name="Stottmann R.W."/>
            <person name="Hufnagel R.B."/>
            <person name="Hopkin R.J."/>
            <person name="Aljeaid D."/>
            <person name="Wiszniewski W."/>
            <person name="Gawlinski P."/>
            <person name="Laure-Kamionowska M."/>
            <person name="Alkuraya F.S."/>
            <person name="Akleh H."/>
            <person name="Stanley V."/>
            <person name="Musaev D."/>
            <person name="Gleeson J.G."/>
            <person name="Zaki M.S."/>
            <person name="Brunetti-Pierri N."/>
            <person name="Cappuccio G."/>
            <person name="Davidov B."/>
            <person name="Basel-Salmon L."/>
            <person name="Bazak L."/>
            <person name="Shahar N.R."/>
            <person name="Bertoli-Avella A."/>
            <person name="Mirzaa G.M."/>
            <person name="Dobyns W.B."/>
            <person name="Pippucci T."/>
            <person name="Fornerod M."/>
            <person name="Mancini G.M.S."/>
        </authorList>
    </citation>
    <scope>FUNCTION</scope>
    <scope>SUBCELLULAR LOCATION</scope>
    <scope>INVOLVEMENT IN NEDMABA</scope>
    <scope>VARIANTS NEDMABA 67-GLN--PRO-866 DEL; 124-GLU--PRO-866 DEL; PRO-231; LEU-446; VAL-661 AND 761-GLN--PRO-866 DEL</scope>
</reference>
<evidence type="ECO:0000250" key="1">
    <source>
        <dbReference type="UniProtKB" id="Q6ZPR5"/>
    </source>
</evidence>
<evidence type="ECO:0000255" key="2"/>
<evidence type="ECO:0000269" key="3">
    <source>
    </source>
</evidence>
<evidence type="ECO:0000269" key="4">
    <source>
    </source>
</evidence>
<evidence type="ECO:0000269" key="5">
    <source>
    </source>
</evidence>
<evidence type="ECO:0000269" key="6">
    <source>
    </source>
</evidence>
<evidence type="ECO:0000303" key="7">
    <source>
    </source>
</evidence>
<evidence type="ECO:0000303" key="8">
    <source>
    </source>
</evidence>
<evidence type="ECO:0000303" key="9">
    <source>
    </source>
</evidence>
<evidence type="ECO:0000303" key="10">
    <source>
    </source>
</evidence>
<evidence type="ECO:0000305" key="11"/>
<evidence type="ECO:0000305" key="12">
    <source>
    </source>
</evidence>
<evidence type="ECO:0000305" key="13">
    <source>
    </source>
</evidence>
<evidence type="ECO:0000312" key="14">
    <source>
        <dbReference type="HGNC" id="HGNC:32949"/>
    </source>
</evidence>
<evidence type="ECO:0007744" key="15">
    <source>
    </source>
</evidence>
<evidence type="ECO:0007744" key="16">
    <source>
    </source>
</evidence>
<evidence type="ECO:0007744" key="17">
    <source>
    </source>
</evidence>
<feature type="chain" id="PRO_0000273163" description="Sphingomyelin phosphodiesterase 4">
    <location>
        <begin position="1"/>
        <end position="866"/>
    </location>
</feature>
<feature type="transmembrane region" description="Helical" evidence="2 12">
    <location>
        <begin position="822"/>
        <end position="842"/>
    </location>
</feature>
<feature type="modified residue" description="Phosphoserine" evidence="15 16 17">
    <location>
        <position position="169"/>
    </location>
</feature>
<feature type="modified residue" description="Phosphoserine" evidence="1">
    <location>
        <position position="285"/>
    </location>
</feature>
<feature type="modified residue" description="Phosphothreonine" evidence="16">
    <location>
        <position position="708"/>
    </location>
</feature>
<feature type="modified residue" description="Phosphoserine" evidence="17">
    <location>
        <position position="792"/>
    </location>
</feature>
<feature type="splice variant" id="VSP_055343" description="In isoform 10." evidence="7">
    <location>
        <begin position="1"/>
        <end position="307"/>
    </location>
</feature>
<feature type="splice variant" id="VSP_054382" description="In isoform 7." evidence="7">
    <original>MTTFGAVAEWRLPSLRRATLWIPQWFAKKAIFNSPLEAAMAFPHLQQPSFLLASLKADSINKPFAQQCQDLVKVIEDFPAKELHTIFPWLVESIFGSLDGVLVGWNLRCLQGRVNPVEYSIVMEFLDPGGPMMKL</original>
    <variation>MQTPPPTRSGGQKLCSRFLLKCGFITIPWRCIKKCSPLMPSWRFCTTDSVSPAPSTAPPNPASRPSTPTKSLGNRGSDARGFYWAEFSSGCVQDEE</variation>
    <location>
        <begin position="1"/>
        <end position="135"/>
    </location>
</feature>
<feature type="splice variant" id="VSP_022480" description="In isoform 3." evidence="8">
    <location>
        <begin position="1"/>
        <end position="131"/>
    </location>
</feature>
<feature type="splice variant" id="VSP_054383" description="In isoform 9." evidence="7">
    <original>MTTFGAVAEWRLPSLRRATLWIPQWFAKKAIFNSPLEAAMAFPHLQQPSFLLASLKADSINKPFAQQCQDLVKVIEDFP</original>
    <variation>MQTPPPTRSGGQKLCSRFLLKCGFITIPWRCIKKCSPLMP</variation>
    <location>
        <begin position="1"/>
        <end position="79"/>
    </location>
</feature>
<feature type="splice variant" id="VSP_022479" description="In isoform 5." evidence="7">
    <location>
        <begin position="40"/>
        <end position="468"/>
    </location>
</feature>
<feature type="splice variant" id="VSP_054384" description="In isoform 9." evidence="7">
    <location>
        <begin position="80"/>
        <end position="404"/>
    </location>
</feature>
<feature type="splice variant" id="VSP_044495" description="In isoform 6 and isoform 8." evidence="7">
    <location>
        <begin position="82"/>
        <end position="154"/>
    </location>
</feature>
<feature type="splice variant" id="VSP_054385" description="In isoform 7." evidence="7">
    <location>
        <begin position="136"/>
        <end position="355"/>
    </location>
</feature>
<feature type="splice variant" id="VSP_054386" description="In isoform 8." evidence="7">
    <location>
        <begin position="155"/>
        <end position="303"/>
    </location>
</feature>
<feature type="splice variant" id="VSP_022481" description="In isoform 2, isoform 6, isoform 8 and isoform 10." evidence="7">
    <location>
        <begin position="328"/>
        <end position="356"/>
    </location>
</feature>
<feature type="splice variant" id="VSP_022482" description="In isoform 4." evidence="7">
    <original>K</original>
    <variation>KRMGLNLPEVPSALPRRSQPSLMGALGSSVSRASLLGKQQVTLPIPC</variation>
    <location>
        <position position="404"/>
    </location>
</feature>
<feature type="splice variant" id="VSP_022483" description="In isoform 5." evidence="7">
    <original>WAPFVQENLLMYTKLFVGFLNRALRTDLVSPKHALMVFRVAKVFAQPNLAEMIQK</original>
    <variation>MSATYCVGDAARQGLRRTPLGHGSPDTSETPQNPKGSSRVLCLREVGARFVSCLL</variation>
    <location>
        <begin position="469"/>
        <end position="523"/>
    </location>
</feature>
<feature type="sequence variant" id="VAR_083329" description="In NEDMABA." evidence="6">
    <location>
        <begin position="67"/>
        <end position="866"/>
    </location>
</feature>
<feature type="sequence variant" id="VAR_083330" description="In NEDMABA." evidence="6">
    <location>
        <begin position="124"/>
        <end position="866"/>
    </location>
</feature>
<feature type="sequence variant" id="VAR_083331" description="In NEDMABA; dbSNP:rs1688560182." evidence="6">
    <original>L</original>
    <variation>P</variation>
    <location>
        <position position="231"/>
    </location>
</feature>
<feature type="sequence variant" id="VAR_083332" description="In NEDMABA; uncertain significance; dbSNP:rs747433356." evidence="6">
    <original>P</original>
    <variation>L</variation>
    <location>
        <position position="446"/>
    </location>
</feature>
<feature type="sequence variant" id="VAR_083333" description="In NEDMABA; uncertain significance; dbSNP:rs1461194496." evidence="6">
    <original>A</original>
    <variation>V</variation>
    <location>
        <position position="661"/>
    </location>
</feature>
<feature type="sequence variant" id="VAR_083334" description="In NEDMABA; uncertain significance." evidence="6">
    <location>
        <begin position="761"/>
        <end position="866"/>
    </location>
</feature>
<feature type="mutagenesis site" description="No effect on endoplasmic reticulum location." evidence="4">
    <original>KLHQ</original>
    <variation>AAAA</variation>
    <location>
        <begin position="862"/>
        <end position="865"/>
    </location>
</feature>
<feature type="sequence conflict" description="In Ref. 3; BAG61230." evidence="11" ref="3">
    <original>S</original>
    <variation>G</variation>
    <location>
        <position position="203"/>
    </location>
</feature>
<feature type="sequence conflict" description="In Ref. 3; BAA91567." evidence="11" ref="3">
    <original>C</original>
    <variation>R</variation>
    <location>
        <position position="579"/>
    </location>
</feature>
<feature type="sequence conflict" description="In Ref. 3; BAA91368." evidence="11" ref="3">
    <original>E</original>
    <variation>K</variation>
    <location>
        <position position="731"/>
    </location>
</feature>
<feature type="sequence conflict" description="In Ref. 3; BAA91567." evidence="11" ref="3">
    <original>L</original>
    <variation>Q</variation>
    <location>
        <position position="732"/>
    </location>
</feature>
<feature type="sequence conflict" description="In Ref. 3; BAC86751." evidence="11" ref="3">
    <original>S</original>
    <variation>G</variation>
    <location>
        <position position="742"/>
    </location>
</feature>
<feature type="sequence conflict" description="In Ref. 3; BAG61230." evidence="11" ref="3">
    <original>K</original>
    <variation>E</variation>
    <location>
        <position position="862"/>
    </location>
</feature>
<protein>
    <recommendedName>
        <fullName evidence="11">Sphingomyelin phosphodiesterase 4</fullName>
        <ecNumber evidence="3">3.1.4.12</ecNumber>
    </recommendedName>
    <alternativeName>
        <fullName evidence="9">Neutral sphingomyelinase 3</fullName>
        <shortName evidence="9">nSMase-3</shortName>
        <shortName evidence="9">nSMase3</shortName>
    </alternativeName>
    <alternativeName>
        <fullName>Neutral sphingomyelinase III</fullName>
    </alternativeName>
</protein>
<organism>
    <name type="scientific">Homo sapiens</name>
    <name type="common">Human</name>
    <dbReference type="NCBI Taxonomy" id="9606"/>
    <lineage>
        <taxon>Eukaryota</taxon>
        <taxon>Metazoa</taxon>
        <taxon>Chordata</taxon>
        <taxon>Craniata</taxon>
        <taxon>Vertebrata</taxon>
        <taxon>Euteleostomi</taxon>
        <taxon>Mammalia</taxon>
        <taxon>Eutheria</taxon>
        <taxon>Euarchontoglires</taxon>
        <taxon>Primates</taxon>
        <taxon>Haplorrhini</taxon>
        <taxon>Catarrhini</taxon>
        <taxon>Hominidae</taxon>
        <taxon>Homo</taxon>
    </lineage>
</organism>